<protein>
    <recommendedName>
        <fullName evidence="1">Large ribosomal subunit protein uL16</fullName>
    </recommendedName>
    <alternativeName>
        <fullName evidence="2">50S ribosomal protein L16</fullName>
    </alternativeName>
</protein>
<accession>Q9ZCR2</accession>
<keyword id="KW-1185">Reference proteome</keyword>
<keyword id="KW-0687">Ribonucleoprotein</keyword>
<keyword id="KW-0689">Ribosomal protein</keyword>
<keyword id="KW-0694">RNA-binding</keyword>
<keyword id="KW-0699">rRNA-binding</keyword>
<keyword id="KW-0820">tRNA-binding</keyword>
<proteinExistence type="inferred from homology"/>
<comment type="function">
    <text evidence="1">Binds 23S rRNA and is also seen to make contacts with the A and possibly P site tRNAs.</text>
</comment>
<comment type="subunit">
    <text evidence="1">Part of the 50S ribosomal subunit.</text>
</comment>
<comment type="similarity">
    <text evidence="1">Belongs to the universal ribosomal protein uL16 family.</text>
</comment>
<gene>
    <name evidence="1" type="primary">rplP</name>
    <name type="ordered locus">RP652</name>
</gene>
<name>RL16_RICPR</name>
<organism>
    <name type="scientific">Rickettsia prowazekii (strain Madrid E)</name>
    <dbReference type="NCBI Taxonomy" id="272947"/>
    <lineage>
        <taxon>Bacteria</taxon>
        <taxon>Pseudomonadati</taxon>
        <taxon>Pseudomonadota</taxon>
        <taxon>Alphaproteobacteria</taxon>
        <taxon>Rickettsiales</taxon>
        <taxon>Rickettsiaceae</taxon>
        <taxon>Rickettsieae</taxon>
        <taxon>Rickettsia</taxon>
        <taxon>typhus group</taxon>
    </lineage>
</organism>
<dbReference type="EMBL" id="AJ235272">
    <property type="protein sequence ID" value="CAA15092.1"/>
    <property type="molecule type" value="Genomic_DNA"/>
</dbReference>
<dbReference type="PIR" id="B71671">
    <property type="entry name" value="B71671"/>
</dbReference>
<dbReference type="RefSeq" id="NP_221016.1">
    <property type="nucleotide sequence ID" value="NC_000963.1"/>
</dbReference>
<dbReference type="RefSeq" id="WP_004596206.1">
    <property type="nucleotide sequence ID" value="NC_000963.1"/>
</dbReference>
<dbReference type="SMR" id="Q9ZCR2"/>
<dbReference type="STRING" id="272947.gene:17555729"/>
<dbReference type="EnsemblBacteria" id="CAA15092">
    <property type="protein sequence ID" value="CAA15092"/>
    <property type="gene ID" value="CAA15092"/>
</dbReference>
<dbReference type="GeneID" id="57569777"/>
<dbReference type="KEGG" id="rpr:RP652"/>
<dbReference type="PATRIC" id="fig|272947.5.peg.674"/>
<dbReference type="eggNOG" id="COG0197">
    <property type="taxonomic scope" value="Bacteria"/>
</dbReference>
<dbReference type="HOGENOM" id="CLU_078858_2_1_5"/>
<dbReference type="OrthoDB" id="9802589at2"/>
<dbReference type="Proteomes" id="UP000002480">
    <property type="component" value="Chromosome"/>
</dbReference>
<dbReference type="GO" id="GO:0022625">
    <property type="term" value="C:cytosolic large ribosomal subunit"/>
    <property type="evidence" value="ECO:0007669"/>
    <property type="project" value="TreeGrafter"/>
</dbReference>
<dbReference type="GO" id="GO:0019843">
    <property type="term" value="F:rRNA binding"/>
    <property type="evidence" value="ECO:0007669"/>
    <property type="project" value="UniProtKB-UniRule"/>
</dbReference>
<dbReference type="GO" id="GO:0003735">
    <property type="term" value="F:structural constituent of ribosome"/>
    <property type="evidence" value="ECO:0007669"/>
    <property type="project" value="InterPro"/>
</dbReference>
<dbReference type="GO" id="GO:0000049">
    <property type="term" value="F:tRNA binding"/>
    <property type="evidence" value="ECO:0007669"/>
    <property type="project" value="UniProtKB-KW"/>
</dbReference>
<dbReference type="GO" id="GO:0006412">
    <property type="term" value="P:translation"/>
    <property type="evidence" value="ECO:0007669"/>
    <property type="project" value="UniProtKB-UniRule"/>
</dbReference>
<dbReference type="CDD" id="cd01433">
    <property type="entry name" value="Ribosomal_L16_L10e"/>
    <property type="match status" value="1"/>
</dbReference>
<dbReference type="FunFam" id="3.90.1170.10:FF:000001">
    <property type="entry name" value="50S ribosomal protein L16"/>
    <property type="match status" value="1"/>
</dbReference>
<dbReference type="Gene3D" id="3.90.1170.10">
    <property type="entry name" value="Ribosomal protein L10e/L16"/>
    <property type="match status" value="1"/>
</dbReference>
<dbReference type="HAMAP" id="MF_01342">
    <property type="entry name" value="Ribosomal_uL16"/>
    <property type="match status" value="1"/>
</dbReference>
<dbReference type="InterPro" id="IPR047873">
    <property type="entry name" value="Ribosomal_uL16"/>
</dbReference>
<dbReference type="InterPro" id="IPR000114">
    <property type="entry name" value="Ribosomal_uL16_bact-type"/>
</dbReference>
<dbReference type="InterPro" id="IPR020798">
    <property type="entry name" value="Ribosomal_uL16_CS"/>
</dbReference>
<dbReference type="InterPro" id="IPR016180">
    <property type="entry name" value="Ribosomal_uL16_dom"/>
</dbReference>
<dbReference type="InterPro" id="IPR036920">
    <property type="entry name" value="Ribosomal_uL16_sf"/>
</dbReference>
<dbReference type="NCBIfam" id="TIGR01164">
    <property type="entry name" value="rplP_bact"/>
    <property type="match status" value="1"/>
</dbReference>
<dbReference type="PANTHER" id="PTHR12220">
    <property type="entry name" value="50S/60S RIBOSOMAL PROTEIN L16"/>
    <property type="match status" value="1"/>
</dbReference>
<dbReference type="PANTHER" id="PTHR12220:SF13">
    <property type="entry name" value="LARGE RIBOSOMAL SUBUNIT PROTEIN UL16M"/>
    <property type="match status" value="1"/>
</dbReference>
<dbReference type="Pfam" id="PF00252">
    <property type="entry name" value="Ribosomal_L16"/>
    <property type="match status" value="1"/>
</dbReference>
<dbReference type="PRINTS" id="PR00060">
    <property type="entry name" value="RIBOSOMALL16"/>
</dbReference>
<dbReference type="SUPFAM" id="SSF54686">
    <property type="entry name" value="Ribosomal protein L16p/L10e"/>
    <property type="match status" value="1"/>
</dbReference>
<dbReference type="PROSITE" id="PS00586">
    <property type="entry name" value="RIBOSOMAL_L16_1"/>
    <property type="match status" value="1"/>
</dbReference>
<dbReference type="PROSITE" id="PS00701">
    <property type="entry name" value="RIBOSOMAL_L16_2"/>
    <property type="match status" value="1"/>
</dbReference>
<reference key="1">
    <citation type="journal article" date="1998" name="Nature">
        <title>The genome sequence of Rickettsia prowazekii and the origin of mitochondria.</title>
        <authorList>
            <person name="Andersson S.G.E."/>
            <person name="Zomorodipour A."/>
            <person name="Andersson J.O."/>
            <person name="Sicheritz-Ponten T."/>
            <person name="Alsmark U.C.M."/>
            <person name="Podowski R.M."/>
            <person name="Naeslund A.K."/>
            <person name="Eriksson A.-S."/>
            <person name="Winkler H.H."/>
            <person name="Kurland C.G."/>
        </authorList>
    </citation>
    <scope>NUCLEOTIDE SEQUENCE [LARGE SCALE GENOMIC DNA]</scope>
    <source>
        <strain>Madrid E</strain>
    </source>
</reference>
<feature type="chain" id="PRO_0000062189" description="Large ribosomal subunit protein uL16">
    <location>
        <begin position="1"/>
        <end position="136"/>
    </location>
</feature>
<evidence type="ECO:0000255" key="1">
    <source>
        <dbReference type="HAMAP-Rule" id="MF_01342"/>
    </source>
</evidence>
<evidence type="ECO:0000305" key="2"/>
<sequence>MLAPKKQKFRKAHKGRVMSKAKAGMTLAFGSFGLKSIDGWRVTARQIEAGRKAATRCMKRQGRLWIRIFPDVPVSKKPAEVRMGKGKGTPEFFAVRVSPGRIMFEIEGVEENIALRALELASAKLPVRTRIVRRYE</sequence>